<dbReference type="EC" id="1.3.1.98" evidence="1"/>
<dbReference type="EMBL" id="CP000448">
    <property type="protein sequence ID" value="ABI68329.1"/>
    <property type="molecule type" value="Genomic_DNA"/>
</dbReference>
<dbReference type="RefSeq" id="WP_011640434.1">
    <property type="nucleotide sequence ID" value="NC_008346.1"/>
</dbReference>
<dbReference type="SMR" id="Q0AY75"/>
<dbReference type="STRING" id="335541.Swol_1015"/>
<dbReference type="KEGG" id="swo:Swol_1015"/>
<dbReference type="eggNOG" id="COG0812">
    <property type="taxonomic scope" value="Bacteria"/>
</dbReference>
<dbReference type="HOGENOM" id="CLU_035304_1_1_9"/>
<dbReference type="OrthoDB" id="9804753at2"/>
<dbReference type="UniPathway" id="UPA00219"/>
<dbReference type="Proteomes" id="UP000001968">
    <property type="component" value="Chromosome"/>
</dbReference>
<dbReference type="GO" id="GO:0005829">
    <property type="term" value="C:cytosol"/>
    <property type="evidence" value="ECO:0007669"/>
    <property type="project" value="TreeGrafter"/>
</dbReference>
<dbReference type="GO" id="GO:0071949">
    <property type="term" value="F:FAD binding"/>
    <property type="evidence" value="ECO:0007669"/>
    <property type="project" value="InterPro"/>
</dbReference>
<dbReference type="GO" id="GO:0008762">
    <property type="term" value="F:UDP-N-acetylmuramate dehydrogenase activity"/>
    <property type="evidence" value="ECO:0007669"/>
    <property type="project" value="UniProtKB-UniRule"/>
</dbReference>
<dbReference type="GO" id="GO:0051301">
    <property type="term" value="P:cell division"/>
    <property type="evidence" value="ECO:0007669"/>
    <property type="project" value="UniProtKB-KW"/>
</dbReference>
<dbReference type="GO" id="GO:0071555">
    <property type="term" value="P:cell wall organization"/>
    <property type="evidence" value="ECO:0007669"/>
    <property type="project" value="UniProtKB-KW"/>
</dbReference>
<dbReference type="GO" id="GO:0009252">
    <property type="term" value="P:peptidoglycan biosynthetic process"/>
    <property type="evidence" value="ECO:0007669"/>
    <property type="project" value="UniProtKB-UniRule"/>
</dbReference>
<dbReference type="GO" id="GO:0008360">
    <property type="term" value="P:regulation of cell shape"/>
    <property type="evidence" value="ECO:0007669"/>
    <property type="project" value="UniProtKB-KW"/>
</dbReference>
<dbReference type="Gene3D" id="3.30.465.10">
    <property type="match status" value="1"/>
</dbReference>
<dbReference type="Gene3D" id="3.90.78.10">
    <property type="entry name" value="UDP-N-acetylenolpyruvoylglucosamine reductase, C-terminal domain"/>
    <property type="match status" value="1"/>
</dbReference>
<dbReference type="Gene3D" id="3.30.43.10">
    <property type="entry name" value="Uridine Diphospho-n-acetylenolpyruvylglucosamine Reductase, domain 2"/>
    <property type="match status" value="1"/>
</dbReference>
<dbReference type="HAMAP" id="MF_00037">
    <property type="entry name" value="MurB"/>
    <property type="match status" value="1"/>
</dbReference>
<dbReference type="InterPro" id="IPR016166">
    <property type="entry name" value="FAD-bd_PCMH"/>
</dbReference>
<dbReference type="InterPro" id="IPR036318">
    <property type="entry name" value="FAD-bd_PCMH-like_sf"/>
</dbReference>
<dbReference type="InterPro" id="IPR016167">
    <property type="entry name" value="FAD-bd_PCMH_sub1"/>
</dbReference>
<dbReference type="InterPro" id="IPR016169">
    <property type="entry name" value="FAD-bd_PCMH_sub2"/>
</dbReference>
<dbReference type="InterPro" id="IPR003170">
    <property type="entry name" value="MurB"/>
</dbReference>
<dbReference type="InterPro" id="IPR011601">
    <property type="entry name" value="MurB_C"/>
</dbReference>
<dbReference type="InterPro" id="IPR036635">
    <property type="entry name" value="MurB_C_sf"/>
</dbReference>
<dbReference type="InterPro" id="IPR006094">
    <property type="entry name" value="Oxid_FAD_bind_N"/>
</dbReference>
<dbReference type="NCBIfam" id="TIGR00179">
    <property type="entry name" value="murB"/>
    <property type="match status" value="1"/>
</dbReference>
<dbReference type="NCBIfam" id="NF010480">
    <property type="entry name" value="PRK13905.1"/>
    <property type="match status" value="1"/>
</dbReference>
<dbReference type="PANTHER" id="PTHR21071">
    <property type="entry name" value="UDP-N-ACETYLENOLPYRUVOYLGLUCOSAMINE REDUCTASE"/>
    <property type="match status" value="1"/>
</dbReference>
<dbReference type="PANTHER" id="PTHR21071:SF4">
    <property type="entry name" value="UDP-N-ACETYLENOLPYRUVOYLGLUCOSAMINE REDUCTASE"/>
    <property type="match status" value="1"/>
</dbReference>
<dbReference type="Pfam" id="PF01565">
    <property type="entry name" value="FAD_binding_4"/>
    <property type="match status" value="1"/>
</dbReference>
<dbReference type="Pfam" id="PF02873">
    <property type="entry name" value="MurB_C"/>
    <property type="match status" value="1"/>
</dbReference>
<dbReference type="SUPFAM" id="SSF56176">
    <property type="entry name" value="FAD-binding/transporter-associated domain-like"/>
    <property type="match status" value="1"/>
</dbReference>
<dbReference type="SUPFAM" id="SSF56194">
    <property type="entry name" value="Uridine diphospho-N-Acetylenolpyruvylglucosamine reductase, MurB, C-terminal domain"/>
    <property type="match status" value="1"/>
</dbReference>
<dbReference type="PROSITE" id="PS51387">
    <property type="entry name" value="FAD_PCMH"/>
    <property type="match status" value="1"/>
</dbReference>
<name>MURB_SYNWW</name>
<organism>
    <name type="scientific">Syntrophomonas wolfei subsp. wolfei (strain DSM 2245B / Goettingen)</name>
    <dbReference type="NCBI Taxonomy" id="335541"/>
    <lineage>
        <taxon>Bacteria</taxon>
        <taxon>Bacillati</taxon>
        <taxon>Bacillota</taxon>
        <taxon>Clostridia</taxon>
        <taxon>Eubacteriales</taxon>
        <taxon>Syntrophomonadaceae</taxon>
        <taxon>Syntrophomonas</taxon>
    </lineage>
</organism>
<reference key="1">
    <citation type="journal article" date="2010" name="Environ. Microbiol.">
        <title>The genome of Syntrophomonas wolfei: new insights into syntrophic metabolism and biohydrogen production.</title>
        <authorList>
            <person name="Sieber J.R."/>
            <person name="Sims D.R."/>
            <person name="Han C."/>
            <person name="Kim E."/>
            <person name="Lykidis A."/>
            <person name="Lapidus A.L."/>
            <person name="McDonnald E."/>
            <person name="Rohlin L."/>
            <person name="Culley D.E."/>
            <person name="Gunsalus R."/>
            <person name="McInerney M.J."/>
        </authorList>
    </citation>
    <scope>NUCLEOTIDE SEQUENCE [LARGE SCALE GENOMIC DNA]</scope>
    <source>
        <strain>DSM 2245B / Goettingen</strain>
    </source>
</reference>
<proteinExistence type="inferred from homology"/>
<accession>Q0AY75</accession>
<sequence>MYSEIFDFLPPERIKINEPMKEHSSFKIGGPVDLMVLPESIEEIQRITHYCRKKDIPCFVFGLGSNILVRDKGIRGVAIKVGNNLKNISICNDTIFAEAGVRLAELSQAAADYSLSGLEFAEGIPGSLGGAVVMNAGAYGGEMKDVLKEVRAITPDGNLSSFKPEEMKLRYRGSIFQEEELIVVSALMQLHKERAEDIRARMQDFAKRRREKQPLEYPSAGSTFRRPAGFFVGPMIEEMGLKGFKVGGAEVSRKHAGFIINSGNATANEVLELIAIVKAKAKEHYGIELETEVKVVGEE</sequence>
<protein>
    <recommendedName>
        <fullName evidence="1">UDP-N-acetylenolpyruvoylglucosamine reductase</fullName>
        <ecNumber evidence="1">1.3.1.98</ecNumber>
    </recommendedName>
    <alternativeName>
        <fullName evidence="1">UDP-N-acetylmuramate dehydrogenase</fullName>
    </alternativeName>
</protein>
<evidence type="ECO:0000255" key="1">
    <source>
        <dbReference type="HAMAP-Rule" id="MF_00037"/>
    </source>
</evidence>
<gene>
    <name evidence="1" type="primary">murB</name>
    <name type="ordered locus">Swol_1015</name>
</gene>
<feature type="chain" id="PRO_0000332516" description="UDP-N-acetylenolpyruvoylglucosamine reductase">
    <location>
        <begin position="1"/>
        <end position="299"/>
    </location>
</feature>
<feature type="domain" description="FAD-binding PCMH-type" evidence="1">
    <location>
        <begin position="28"/>
        <end position="193"/>
    </location>
</feature>
<feature type="active site" evidence="1">
    <location>
        <position position="172"/>
    </location>
</feature>
<feature type="active site" description="Proton donor" evidence="1">
    <location>
        <position position="222"/>
    </location>
</feature>
<feature type="active site" evidence="1">
    <location>
        <position position="292"/>
    </location>
</feature>
<keyword id="KW-0131">Cell cycle</keyword>
<keyword id="KW-0132">Cell division</keyword>
<keyword id="KW-0133">Cell shape</keyword>
<keyword id="KW-0961">Cell wall biogenesis/degradation</keyword>
<keyword id="KW-0963">Cytoplasm</keyword>
<keyword id="KW-0274">FAD</keyword>
<keyword id="KW-0285">Flavoprotein</keyword>
<keyword id="KW-0521">NADP</keyword>
<keyword id="KW-0560">Oxidoreductase</keyword>
<keyword id="KW-0573">Peptidoglycan synthesis</keyword>
<keyword id="KW-1185">Reference proteome</keyword>
<comment type="function">
    <text evidence="1">Cell wall formation.</text>
</comment>
<comment type="catalytic activity">
    <reaction evidence="1">
        <text>UDP-N-acetyl-alpha-D-muramate + NADP(+) = UDP-N-acetyl-3-O-(1-carboxyvinyl)-alpha-D-glucosamine + NADPH + H(+)</text>
        <dbReference type="Rhea" id="RHEA:12248"/>
        <dbReference type="ChEBI" id="CHEBI:15378"/>
        <dbReference type="ChEBI" id="CHEBI:57783"/>
        <dbReference type="ChEBI" id="CHEBI:58349"/>
        <dbReference type="ChEBI" id="CHEBI:68483"/>
        <dbReference type="ChEBI" id="CHEBI:70757"/>
        <dbReference type="EC" id="1.3.1.98"/>
    </reaction>
</comment>
<comment type="cofactor">
    <cofactor evidence="1">
        <name>FAD</name>
        <dbReference type="ChEBI" id="CHEBI:57692"/>
    </cofactor>
</comment>
<comment type="pathway">
    <text evidence="1">Cell wall biogenesis; peptidoglycan biosynthesis.</text>
</comment>
<comment type="subcellular location">
    <subcellularLocation>
        <location evidence="1">Cytoplasm</location>
    </subcellularLocation>
</comment>
<comment type="similarity">
    <text evidence="1">Belongs to the MurB family.</text>
</comment>